<comment type="function">
    <text evidence="1">Catalyzes the reduction of methionine sulfoxide (MetSO) to methionine in proteins. Plays a protective role against oxidative stress by restoring activity to proteins that have been inactivated by methionine oxidation. MSRA family specifically reduces the MetSO S-enantiomer (By similarity).</text>
</comment>
<comment type="catalytic activity">
    <reaction>
        <text>L-methionyl-[protein] + [thioredoxin]-disulfide + H2O = L-methionyl-(S)-S-oxide-[protein] + [thioredoxin]-dithiol</text>
        <dbReference type="Rhea" id="RHEA:14217"/>
        <dbReference type="Rhea" id="RHEA-COMP:10698"/>
        <dbReference type="Rhea" id="RHEA-COMP:10700"/>
        <dbReference type="Rhea" id="RHEA-COMP:12313"/>
        <dbReference type="Rhea" id="RHEA-COMP:12315"/>
        <dbReference type="ChEBI" id="CHEBI:15377"/>
        <dbReference type="ChEBI" id="CHEBI:16044"/>
        <dbReference type="ChEBI" id="CHEBI:29950"/>
        <dbReference type="ChEBI" id="CHEBI:44120"/>
        <dbReference type="ChEBI" id="CHEBI:50058"/>
        <dbReference type="EC" id="1.8.4.11"/>
    </reaction>
</comment>
<comment type="catalytic activity">
    <reaction>
        <text>[thioredoxin]-disulfide + L-methionine + H2O = L-methionine (S)-S-oxide + [thioredoxin]-dithiol</text>
        <dbReference type="Rhea" id="RHEA:19993"/>
        <dbReference type="Rhea" id="RHEA-COMP:10698"/>
        <dbReference type="Rhea" id="RHEA-COMP:10700"/>
        <dbReference type="ChEBI" id="CHEBI:15377"/>
        <dbReference type="ChEBI" id="CHEBI:29950"/>
        <dbReference type="ChEBI" id="CHEBI:50058"/>
        <dbReference type="ChEBI" id="CHEBI:57844"/>
        <dbReference type="ChEBI" id="CHEBI:58772"/>
        <dbReference type="EC" id="1.8.4.11"/>
    </reaction>
</comment>
<comment type="alternative products">
    <event type="alternative splicing"/>
    <isoform>
        <id>Q9SL43-1</id>
        <name>1</name>
        <sequence type="displayed"/>
    </isoform>
    <isoform>
        <id>Q9SL43-2</id>
        <name>2</name>
        <sequence type="described" ref="VSP_039505 VSP_039506"/>
    </isoform>
</comment>
<comment type="similarity">
    <text evidence="4">Belongs to the MsrA Met sulfoxide reductase family.</text>
</comment>
<feature type="signal peptide" evidence="2">
    <location>
        <begin position="1"/>
        <end position="33"/>
    </location>
</feature>
<feature type="chain" id="PRO_0000395514" description="Peptide methionine sulfoxide reductase A5">
    <location>
        <begin position="34"/>
        <end position="254"/>
    </location>
</feature>
<feature type="splice variant" id="VSP_039505" description="In isoform 2." evidence="3">
    <original>KFE</original>
    <variation>VQL</variation>
    <location>
        <begin position="190"/>
        <end position="192"/>
    </location>
</feature>
<feature type="splice variant" id="VSP_039506" description="In isoform 2." evidence="3">
    <location>
        <begin position="193"/>
        <end position="254"/>
    </location>
</feature>
<dbReference type="EC" id="1.8.4.11"/>
<dbReference type="EMBL" id="AC006201">
    <property type="protein sequence ID" value="AAD20123.1"/>
    <property type="molecule type" value="Genomic_DNA"/>
</dbReference>
<dbReference type="EMBL" id="CP002685">
    <property type="protein sequence ID" value="AEC06717.1"/>
    <property type="molecule type" value="Genomic_DNA"/>
</dbReference>
<dbReference type="EMBL" id="CP002685">
    <property type="protein sequence ID" value="AEC06718.1"/>
    <property type="molecule type" value="Genomic_DNA"/>
</dbReference>
<dbReference type="EMBL" id="BX819229">
    <property type="status" value="NOT_ANNOTATED_CDS"/>
    <property type="molecule type" value="mRNA"/>
</dbReference>
<dbReference type="EMBL" id="BT003071">
    <property type="protein sequence ID" value="AAO23636.1"/>
    <property type="molecule type" value="mRNA"/>
</dbReference>
<dbReference type="EMBL" id="AK227376">
    <property type="protein sequence ID" value="BAE99383.1"/>
    <property type="molecule type" value="mRNA"/>
</dbReference>
<dbReference type="PIR" id="D84559">
    <property type="entry name" value="D84559"/>
</dbReference>
<dbReference type="RefSeq" id="NP_179394.1">
    <molecule id="Q9SL43-1"/>
    <property type="nucleotide sequence ID" value="NM_127359.5"/>
</dbReference>
<dbReference type="RefSeq" id="NP_973483.1">
    <molecule id="Q9SL43-2"/>
    <property type="nucleotide sequence ID" value="NM_201754.1"/>
</dbReference>
<dbReference type="SMR" id="Q9SL43"/>
<dbReference type="FunCoup" id="Q9SL43">
    <property type="interactions" value="747"/>
</dbReference>
<dbReference type="STRING" id="3702.Q9SL43"/>
<dbReference type="PaxDb" id="3702-AT2G18030.1"/>
<dbReference type="ProteomicsDB" id="238916">
    <molecule id="Q9SL43-1"/>
</dbReference>
<dbReference type="EnsemblPlants" id="AT2G18030.1">
    <molecule id="Q9SL43-1"/>
    <property type="protein sequence ID" value="AT2G18030.1"/>
    <property type="gene ID" value="AT2G18030"/>
</dbReference>
<dbReference type="EnsemblPlants" id="AT2G18030.2">
    <molecule id="Q9SL43-2"/>
    <property type="protein sequence ID" value="AT2G18030.2"/>
    <property type="gene ID" value="AT2G18030"/>
</dbReference>
<dbReference type="GeneID" id="816315"/>
<dbReference type="Gramene" id="AT2G18030.1">
    <molecule id="Q9SL43-1"/>
    <property type="protein sequence ID" value="AT2G18030.1"/>
    <property type="gene ID" value="AT2G18030"/>
</dbReference>
<dbReference type="Gramene" id="AT2G18030.2">
    <molecule id="Q9SL43-2"/>
    <property type="protein sequence ID" value="AT2G18030.2"/>
    <property type="gene ID" value="AT2G18030"/>
</dbReference>
<dbReference type="KEGG" id="ath:AT2G18030"/>
<dbReference type="Araport" id="AT2G18030"/>
<dbReference type="TAIR" id="AT2G18030">
    <property type="gene designation" value="MSRA5"/>
</dbReference>
<dbReference type="eggNOG" id="KOG1635">
    <property type="taxonomic scope" value="Eukaryota"/>
</dbReference>
<dbReference type="HOGENOM" id="CLU_031040_6_0_1"/>
<dbReference type="InParanoid" id="Q9SL43"/>
<dbReference type="OMA" id="PEHQVAM"/>
<dbReference type="PhylomeDB" id="Q9SL43"/>
<dbReference type="BRENDA" id="1.8.4.11">
    <property type="organism ID" value="399"/>
</dbReference>
<dbReference type="PRO" id="PR:Q9SL43"/>
<dbReference type="Proteomes" id="UP000006548">
    <property type="component" value="Chromosome 2"/>
</dbReference>
<dbReference type="ExpressionAtlas" id="Q9SL43">
    <property type="expression patterns" value="baseline and differential"/>
</dbReference>
<dbReference type="GO" id="GO:0033744">
    <property type="term" value="F:L-methionine:thioredoxin-disulfide S-oxidoreductase activity"/>
    <property type="evidence" value="ECO:0007669"/>
    <property type="project" value="RHEA"/>
</dbReference>
<dbReference type="GO" id="GO:0008113">
    <property type="term" value="F:peptide-methionine (S)-S-oxide reductase activity"/>
    <property type="evidence" value="ECO:0007669"/>
    <property type="project" value="UniProtKB-EC"/>
</dbReference>
<dbReference type="FunFam" id="3.30.1060.10:FF:000004">
    <property type="entry name" value="Peptide methionine sulfoxide reductase A5"/>
    <property type="match status" value="1"/>
</dbReference>
<dbReference type="Gene3D" id="3.30.1060.10">
    <property type="entry name" value="Peptide methionine sulphoxide reductase MsrA"/>
    <property type="match status" value="1"/>
</dbReference>
<dbReference type="HAMAP" id="MF_01401">
    <property type="entry name" value="MsrA"/>
    <property type="match status" value="1"/>
</dbReference>
<dbReference type="InterPro" id="IPR002569">
    <property type="entry name" value="Met_Sox_Rdtase_MsrA_dom"/>
</dbReference>
<dbReference type="InterPro" id="IPR036509">
    <property type="entry name" value="Met_Sox_Rdtase_MsrA_sf"/>
</dbReference>
<dbReference type="InterPro" id="IPR050162">
    <property type="entry name" value="MsrA_MetSO_reductase"/>
</dbReference>
<dbReference type="NCBIfam" id="TIGR00401">
    <property type="entry name" value="msrA"/>
    <property type="match status" value="1"/>
</dbReference>
<dbReference type="PANTHER" id="PTHR42799">
    <property type="entry name" value="MITOCHONDRIAL PEPTIDE METHIONINE SULFOXIDE REDUCTASE"/>
    <property type="match status" value="1"/>
</dbReference>
<dbReference type="PANTHER" id="PTHR42799:SF3">
    <property type="entry name" value="PEPTIDE METHIONINE SULFOXIDE REDUCTASE A5"/>
    <property type="match status" value="1"/>
</dbReference>
<dbReference type="Pfam" id="PF01625">
    <property type="entry name" value="PMSR"/>
    <property type="match status" value="1"/>
</dbReference>
<dbReference type="SUPFAM" id="SSF55068">
    <property type="entry name" value="Peptide methionine sulfoxide reductase"/>
    <property type="match status" value="1"/>
</dbReference>
<gene>
    <name type="primary">MSRA5</name>
    <name type="ordered locus">At2g18030</name>
    <name type="ORF">T27K22.10</name>
</gene>
<accession>Q9SL43</accession>
<accession>Q3E7T3</accession>
<sequence>MAISLKRNRFFIPYTNLVFFFFLCVSLLDKTVSIRISNQISDTVVDSPDRPLKSAVFALGSFWRSEAAFGCINGVVRTSAGYAGGTKTNPEYRNLGDHAESVQVEYDPRIIGYRQLLDVFWSSHDSRQVFGQGPDVGNQYRSCIFTNSTEELRLASTSKEREQLNTRSSIVTTQIQQLGTFYRAEPDHQKFELKQHPFLIQLIGNMVEEELERSALATKLNGYAAELCPPRIQKHIDSRVNEIIRKGWPVLRDI</sequence>
<reference key="1">
    <citation type="journal article" date="1999" name="Nature">
        <title>Sequence and analysis of chromosome 2 of the plant Arabidopsis thaliana.</title>
        <authorList>
            <person name="Lin X."/>
            <person name="Kaul S."/>
            <person name="Rounsley S.D."/>
            <person name="Shea T.P."/>
            <person name="Benito M.-I."/>
            <person name="Town C.D."/>
            <person name="Fujii C.Y."/>
            <person name="Mason T.M."/>
            <person name="Bowman C.L."/>
            <person name="Barnstead M.E."/>
            <person name="Feldblyum T.V."/>
            <person name="Buell C.R."/>
            <person name="Ketchum K.A."/>
            <person name="Lee J.J."/>
            <person name="Ronning C.M."/>
            <person name="Koo H.L."/>
            <person name="Moffat K.S."/>
            <person name="Cronin L.A."/>
            <person name="Shen M."/>
            <person name="Pai G."/>
            <person name="Van Aken S."/>
            <person name="Umayam L."/>
            <person name="Tallon L.J."/>
            <person name="Gill J.E."/>
            <person name="Adams M.D."/>
            <person name="Carrera A.J."/>
            <person name="Creasy T.H."/>
            <person name="Goodman H.M."/>
            <person name="Somerville C.R."/>
            <person name="Copenhaver G.P."/>
            <person name="Preuss D."/>
            <person name="Nierman W.C."/>
            <person name="White O."/>
            <person name="Eisen J.A."/>
            <person name="Salzberg S.L."/>
            <person name="Fraser C.M."/>
            <person name="Venter J.C."/>
        </authorList>
    </citation>
    <scope>NUCLEOTIDE SEQUENCE [LARGE SCALE GENOMIC DNA]</scope>
    <source>
        <strain>cv. Columbia</strain>
    </source>
</reference>
<reference key="2">
    <citation type="journal article" date="2017" name="Plant J.">
        <title>Araport11: a complete reannotation of the Arabidopsis thaliana reference genome.</title>
        <authorList>
            <person name="Cheng C.Y."/>
            <person name="Krishnakumar V."/>
            <person name="Chan A.P."/>
            <person name="Thibaud-Nissen F."/>
            <person name="Schobel S."/>
            <person name="Town C.D."/>
        </authorList>
    </citation>
    <scope>GENOME REANNOTATION</scope>
    <source>
        <strain>cv. Columbia</strain>
    </source>
</reference>
<reference key="3">
    <citation type="journal article" date="2003" name="Science">
        <title>Empirical analysis of transcriptional activity in the Arabidopsis genome.</title>
        <authorList>
            <person name="Yamada K."/>
            <person name="Lim J."/>
            <person name="Dale J.M."/>
            <person name="Chen H."/>
            <person name="Shinn P."/>
            <person name="Palm C.J."/>
            <person name="Southwick A.M."/>
            <person name="Wu H.C."/>
            <person name="Kim C.J."/>
            <person name="Nguyen M."/>
            <person name="Pham P.K."/>
            <person name="Cheuk R.F."/>
            <person name="Karlin-Newmann G."/>
            <person name="Liu S.X."/>
            <person name="Lam B."/>
            <person name="Sakano H."/>
            <person name="Wu T."/>
            <person name="Yu G."/>
            <person name="Miranda M."/>
            <person name="Quach H.L."/>
            <person name="Tripp M."/>
            <person name="Chang C.H."/>
            <person name="Lee J.M."/>
            <person name="Toriumi M.J."/>
            <person name="Chan M.M."/>
            <person name="Tang C.C."/>
            <person name="Onodera C.S."/>
            <person name="Deng J.M."/>
            <person name="Akiyama K."/>
            <person name="Ansari Y."/>
            <person name="Arakawa T."/>
            <person name="Banh J."/>
            <person name="Banno F."/>
            <person name="Bowser L."/>
            <person name="Brooks S.Y."/>
            <person name="Carninci P."/>
            <person name="Chao Q."/>
            <person name="Choy N."/>
            <person name="Enju A."/>
            <person name="Goldsmith A.D."/>
            <person name="Gurjal M."/>
            <person name="Hansen N.F."/>
            <person name="Hayashizaki Y."/>
            <person name="Johnson-Hopson C."/>
            <person name="Hsuan V.W."/>
            <person name="Iida K."/>
            <person name="Karnes M."/>
            <person name="Khan S."/>
            <person name="Koesema E."/>
            <person name="Ishida J."/>
            <person name="Jiang P.X."/>
            <person name="Jones T."/>
            <person name="Kawai J."/>
            <person name="Kamiya A."/>
            <person name="Meyers C."/>
            <person name="Nakajima M."/>
            <person name="Narusaka M."/>
            <person name="Seki M."/>
            <person name="Sakurai T."/>
            <person name="Satou M."/>
            <person name="Tamse R."/>
            <person name="Vaysberg M."/>
            <person name="Wallender E.K."/>
            <person name="Wong C."/>
            <person name="Yamamura Y."/>
            <person name="Yuan S."/>
            <person name="Shinozaki K."/>
            <person name="Davis R.W."/>
            <person name="Theologis A."/>
            <person name="Ecker J.R."/>
        </authorList>
    </citation>
    <scope>NUCLEOTIDE SEQUENCE [LARGE SCALE MRNA] (ISOFORM 1)</scope>
    <source>
        <strain>cv. Columbia</strain>
    </source>
</reference>
<reference key="4">
    <citation type="journal article" date="2004" name="Genome Res.">
        <title>Whole genome sequence comparisons and 'full-length' cDNA sequences: a combined approach to evaluate and improve Arabidopsis genome annotation.</title>
        <authorList>
            <person name="Castelli V."/>
            <person name="Aury J.-M."/>
            <person name="Jaillon O."/>
            <person name="Wincker P."/>
            <person name="Clepet C."/>
            <person name="Menard M."/>
            <person name="Cruaud C."/>
            <person name="Quetier F."/>
            <person name="Scarpelli C."/>
            <person name="Schaechter V."/>
            <person name="Temple G."/>
            <person name="Caboche M."/>
            <person name="Weissenbach J."/>
            <person name="Salanoubat M."/>
        </authorList>
    </citation>
    <scope>NUCLEOTIDE SEQUENCE [LARGE SCALE MRNA] (ISOFORM 2)</scope>
    <source>
        <strain>cv. Columbia</strain>
    </source>
</reference>
<reference key="5">
    <citation type="submission" date="2006-07" db="EMBL/GenBank/DDBJ databases">
        <title>Large-scale analysis of RIKEN Arabidopsis full-length (RAFL) cDNAs.</title>
        <authorList>
            <person name="Totoki Y."/>
            <person name="Seki M."/>
            <person name="Ishida J."/>
            <person name="Nakajima M."/>
            <person name="Enju A."/>
            <person name="Kamiya A."/>
            <person name="Narusaka M."/>
            <person name="Shin-i T."/>
            <person name="Nakagawa M."/>
            <person name="Sakamoto N."/>
            <person name="Oishi K."/>
            <person name="Kohara Y."/>
            <person name="Kobayashi M."/>
            <person name="Toyoda A."/>
            <person name="Sakaki Y."/>
            <person name="Sakurai T."/>
            <person name="Iida K."/>
            <person name="Akiyama K."/>
            <person name="Satou M."/>
            <person name="Toyoda T."/>
            <person name="Konagaya A."/>
            <person name="Carninci P."/>
            <person name="Kawai J."/>
            <person name="Hayashizaki Y."/>
            <person name="Shinozaki K."/>
        </authorList>
    </citation>
    <scope>NUCLEOTIDE SEQUENCE [LARGE SCALE MRNA] (ISOFORM 1)</scope>
    <source>
        <strain>cv. Columbia</strain>
    </source>
</reference>
<reference key="6">
    <citation type="journal article" date="2006" name="Photosyn. Res.">
        <title>Plant methionine sulfoxide reductase A and B multigenic families.</title>
        <authorList>
            <person name="Rouhier N."/>
            <person name="Vieira Dos Santos C."/>
            <person name="Tarrago L."/>
            <person name="Rey P."/>
        </authorList>
    </citation>
    <scope>GENE FAMILY</scope>
    <scope>NOMENCLATURE</scope>
</reference>
<keyword id="KW-0025">Alternative splicing</keyword>
<keyword id="KW-0560">Oxidoreductase</keyword>
<keyword id="KW-1185">Reference proteome</keyword>
<keyword id="KW-0732">Signal</keyword>
<proteinExistence type="evidence at transcript level"/>
<protein>
    <recommendedName>
        <fullName>Peptide methionine sulfoxide reductase A5</fullName>
        <shortName>AtMSRA5</shortName>
        <ecNumber>1.8.4.11</ecNumber>
    </recommendedName>
    <alternativeName>
        <fullName>Peptide-methionine (S)-S-oxide reductase</fullName>
        <shortName>Peptide Met(O) reductase</shortName>
    </alternativeName>
    <alternativeName>
        <fullName>Protein-methionine-S-oxide reductase</fullName>
    </alternativeName>
</protein>
<organism>
    <name type="scientific">Arabidopsis thaliana</name>
    <name type="common">Mouse-ear cress</name>
    <dbReference type="NCBI Taxonomy" id="3702"/>
    <lineage>
        <taxon>Eukaryota</taxon>
        <taxon>Viridiplantae</taxon>
        <taxon>Streptophyta</taxon>
        <taxon>Embryophyta</taxon>
        <taxon>Tracheophyta</taxon>
        <taxon>Spermatophyta</taxon>
        <taxon>Magnoliopsida</taxon>
        <taxon>eudicotyledons</taxon>
        <taxon>Gunneridae</taxon>
        <taxon>Pentapetalae</taxon>
        <taxon>rosids</taxon>
        <taxon>malvids</taxon>
        <taxon>Brassicales</taxon>
        <taxon>Brassicaceae</taxon>
        <taxon>Camelineae</taxon>
        <taxon>Arabidopsis</taxon>
    </lineage>
</organism>
<name>MSRA5_ARATH</name>
<evidence type="ECO:0000250" key="1"/>
<evidence type="ECO:0000255" key="2"/>
<evidence type="ECO:0000303" key="3">
    <source>
    </source>
</evidence>
<evidence type="ECO:0000305" key="4"/>